<keyword id="KW-0963">Cytoplasm</keyword>
<keyword id="KW-0269">Exonuclease</keyword>
<keyword id="KW-0378">Hydrolase</keyword>
<keyword id="KW-0540">Nuclease</keyword>
<accession>Q130G8</accession>
<organism>
    <name type="scientific">Rhodopseudomonas palustris (strain BisB5)</name>
    <dbReference type="NCBI Taxonomy" id="316057"/>
    <lineage>
        <taxon>Bacteria</taxon>
        <taxon>Pseudomonadati</taxon>
        <taxon>Pseudomonadota</taxon>
        <taxon>Alphaproteobacteria</taxon>
        <taxon>Hyphomicrobiales</taxon>
        <taxon>Nitrobacteraceae</taxon>
        <taxon>Rhodopseudomonas</taxon>
    </lineage>
</organism>
<evidence type="ECO:0000255" key="1">
    <source>
        <dbReference type="HAMAP-Rule" id="MF_00337"/>
    </source>
</evidence>
<dbReference type="EC" id="3.1.11.6" evidence="1"/>
<dbReference type="EMBL" id="CP000283">
    <property type="protein sequence ID" value="ABE41521.1"/>
    <property type="molecule type" value="Genomic_DNA"/>
</dbReference>
<dbReference type="SMR" id="Q130G8"/>
<dbReference type="STRING" id="316057.RPD_4304"/>
<dbReference type="KEGG" id="rpd:RPD_4304"/>
<dbReference type="eggNOG" id="COG1722">
    <property type="taxonomic scope" value="Bacteria"/>
</dbReference>
<dbReference type="HOGENOM" id="CLU_145918_0_3_5"/>
<dbReference type="BioCyc" id="RPAL316057:RPD_RS21655-MONOMER"/>
<dbReference type="Proteomes" id="UP000001818">
    <property type="component" value="Chromosome"/>
</dbReference>
<dbReference type="GO" id="GO:0005829">
    <property type="term" value="C:cytosol"/>
    <property type="evidence" value="ECO:0007669"/>
    <property type="project" value="TreeGrafter"/>
</dbReference>
<dbReference type="GO" id="GO:0009318">
    <property type="term" value="C:exodeoxyribonuclease VII complex"/>
    <property type="evidence" value="ECO:0007669"/>
    <property type="project" value="InterPro"/>
</dbReference>
<dbReference type="GO" id="GO:0008855">
    <property type="term" value="F:exodeoxyribonuclease VII activity"/>
    <property type="evidence" value="ECO:0007669"/>
    <property type="project" value="UniProtKB-UniRule"/>
</dbReference>
<dbReference type="GO" id="GO:0006308">
    <property type="term" value="P:DNA catabolic process"/>
    <property type="evidence" value="ECO:0007669"/>
    <property type="project" value="UniProtKB-UniRule"/>
</dbReference>
<dbReference type="FunFam" id="1.10.287.1040:FF:000004">
    <property type="entry name" value="Exodeoxyribonuclease 7 small subunit"/>
    <property type="match status" value="1"/>
</dbReference>
<dbReference type="Gene3D" id="1.10.287.1040">
    <property type="entry name" value="Exonuclease VII, small subunit"/>
    <property type="match status" value="1"/>
</dbReference>
<dbReference type="HAMAP" id="MF_00337">
    <property type="entry name" value="Exonuc_7_S"/>
    <property type="match status" value="1"/>
</dbReference>
<dbReference type="InterPro" id="IPR003761">
    <property type="entry name" value="Exonuc_VII_S"/>
</dbReference>
<dbReference type="InterPro" id="IPR037004">
    <property type="entry name" value="Exonuc_VII_ssu_sf"/>
</dbReference>
<dbReference type="NCBIfam" id="NF002139">
    <property type="entry name" value="PRK00977.1-3"/>
    <property type="match status" value="1"/>
</dbReference>
<dbReference type="NCBIfam" id="NF002140">
    <property type="entry name" value="PRK00977.1-4"/>
    <property type="match status" value="1"/>
</dbReference>
<dbReference type="NCBIfam" id="TIGR01280">
    <property type="entry name" value="xseB"/>
    <property type="match status" value="1"/>
</dbReference>
<dbReference type="PANTHER" id="PTHR34137">
    <property type="entry name" value="EXODEOXYRIBONUCLEASE 7 SMALL SUBUNIT"/>
    <property type="match status" value="1"/>
</dbReference>
<dbReference type="PANTHER" id="PTHR34137:SF1">
    <property type="entry name" value="EXODEOXYRIBONUCLEASE 7 SMALL SUBUNIT"/>
    <property type="match status" value="1"/>
</dbReference>
<dbReference type="Pfam" id="PF02609">
    <property type="entry name" value="Exonuc_VII_S"/>
    <property type="match status" value="1"/>
</dbReference>
<dbReference type="PIRSF" id="PIRSF006488">
    <property type="entry name" value="Exonuc_VII_S"/>
    <property type="match status" value="1"/>
</dbReference>
<dbReference type="SUPFAM" id="SSF116842">
    <property type="entry name" value="XseB-like"/>
    <property type="match status" value="1"/>
</dbReference>
<name>EX7S_RHOPS</name>
<sequence length="83" mass="9269">MADAAPADVKKLSFERAMEELETIVKRLEDGKVPLEESVAIYERGEALKRRCDELLRQAEARVDKITTDAQGKPVGTEPLDVQ</sequence>
<reference key="1">
    <citation type="submission" date="2006-03" db="EMBL/GenBank/DDBJ databases">
        <title>Complete sequence of Rhodopseudomonas palustris BisB5.</title>
        <authorList>
            <consortium name="US DOE Joint Genome Institute"/>
            <person name="Copeland A."/>
            <person name="Lucas S."/>
            <person name="Lapidus A."/>
            <person name="Barry K."/>
            <person name="Detter J.C."/>
            <person name="Glavina del Rio T."/>
            <person name="Hammon N."/>
            <person name="Israni S."/>
            <person name="Dalin E."/>
            <person name="Tice H."/>
            <person name="Pitluck S."/>
            <person name="Chain P."/>
            <person name="Malfatti S."/>
            <person name="Shin M."/>
            <person name="Vergez L."/>
            <person name="Schmutz J."/>
            <person name="Larimer F."/>
            <person name="Land M."/>
            <person name="Hauser L."/>
            <person name="Pelletier D.A."/>
            <person name="Kyrpides N."/>
            <person name="Lykidis A."/>
            <person name="Oda Y."/>
            <person name="Harwood C.S."/>
            <person name="Richardson P."/>
        </authorList>
    </citation>
    <scope>NUCLEOTIDE SEQUENCE [LARGE SCALE GENOMIC DNA]</scope>
    <source>
        <strain>BisB5</strain>
    </source>
</reference>
<comment type="function">
    <text evidence="1">Bidirectionally degrades single-stranded DNA into large acid-insoluble oligonucleotides, which are then degraded further into small acid-soluble oligonucleotides.</text>
</comment>
<comment type="catalytic activity">
    <reaction evidence="1">
        <text>Exonucleolytic cleavage in either 5'- to 3'- or 3'- to 5'-direction to yield nucleoside 5'-phosphates.</text>
        <dbReference type="EC" id="3.1.11.6"/>
    </reaction>
</comment>
<comment type="subunit">
    <text evidence="1">Heterooligomer composed of large and small subunits.</text>
</comment>
<comment type="subcellular location">
    <subcellularLocation>
        <location evidence="1">Cytoplasm</location>
    </subcellularLocation>
</comment>
<comment type="similarity">
    <text evidence="1">Belongs to the XseB family.</text>
</comment>
<gene>
    <name evidence="1" type="primary">xseB</name>
    <name type="ordered locus">RPD_4304</name>
</gene>
<proteinExistence type="inferred from homology"/>
<protein>
    <recommendedName>
        <fullName evidence="1">Exodeoxyribonuclease 7 small subunit</fullName>
        <ecNumber evidence="1">3.1.11.6</ecNumber>
    </recommendedName>
    <alternativeName>
        <fullName evidence="1">Exodeoxyribonuclease VII small subunit</fullName>
        <shortName evidence="1">Exonuclease VII small subunit</shortName>
    </alternativeName>
</protein>
<feature type="chain" id="PRO_0000303741" description="Exodeoxyribonuclease 7 small subunit">
    <location>
        <begin position="1"/>
        <end position="83"/>
    </location>
</feature>